<proteinExistence type="inferred from homology"/>
<comment type="function">
    <text evidence="1">One of the primary rRNA binding proteins, it binds directly to 16S rRNA central domain where it helps coordinate assembly of the platform of the 30S subunit.</text>
</comment>
<comment type="subunit">
    <text evidence="1">Part of the 30S ribosomal subunit. Contacts proteins S5 and S12.</text>
</comment>
<comment type="similarity">
    <text evidence="1">Belongs to the universal ribosomal protein uS8 family.</text>
</comment>
<protein>
    <recommendedName>
        <fullName evidence="1">Small ribosomal subunit protein uS8</fullName>
    </recommendedName>
    <alternativeName>
        <fullName evidence="2">30S ribosomal protein S8</fullName>
    </alternativeName>
</protein>
<feature type="chain" id="PRO_0000290819" description="Small ribosomal subunit protein uS8">
    <location>
        <begin position="1"/>
        <end position="131"/>
    </location>
</feature>
<name>RS8_CHLPD</name>
<dbReference type="EMBL" id="CP000492">
    <property type="protein sequence ID" value="ABL66397.1"/>
    <property type="molecule type" value="Genomic_DNA"/>
</dbReference>
<dbReference type="RefSeq" id="WP_011746179.1">
    <property type="nucleotide sequence ID" value="NC_008639.1"/>
</dbReference>
<dbReference type="SMR" id="A1BJ20"/>
<dbReference type="STRING" id="290317.Cpha266_2409"/>
<dbReference type="KEGG" id="cph:Cpha266_2409"/>
<dbReference type="eggNOG" id="COG0096">
    <property type="taxonomic scope" value="Bacteria"/>
</dbReference>
<dbReference type="HOGENOM" id="CLU_098428_0_0_10"/>
<dbReference type="OrthoDB" id="9802617at2"/>
<dbReference type="Proteomes" id="UP000008701">
    <property type="component" value="Chromosome"/>
</dbReference>
<dbReference type="GO" id="GO:1990904">
    <property type="term" value="C:ribonucleoprotein complex"/>
    <property type="evidence" value="ECO:0007669"/>
    <property type="project" value="UniProtKB-KW"/>
</dbReference>
<dbReference type="GO" id="GO:0005840">
    <property type="term" value="C:ribosome"/>
    <property type="evidence" value="ECO:0007669"/>
    <property type="project" value="UniProtKB-KW"/>
</dbReference>
<dbReference type="GO" id="GO:0019843">
    <property type="term" value="F:rRNA binding"/>
    <property type="evidence" value="ECO:0007669"/>
    <property type="project" value="UniProtKB-UniRule"/>
</dbReference>
<dbReference type="GO" id="GO:0003735">
    <property type="term" value="F:structural constituent of ribosome"/>
    <property type="evidence" value="ECO:0007669"/>
    <property type="project" value="InterPro"/>
</dbReference>
<dbReference type="GO" id="GO:0006412">
    <property type="term" value="P:translation"/>
    <property type="evidence" value="ECO:0007669"/>
    <property type="project" value="UniProtKB-UniRule"/>
</dbReference>
<dbReference type="FunFam" id="3.30.1370.30:FF:000002">
    <property type="entry name" value="30S ribosomal protein S8"/>
    <property type="match status" value="1"/>
</dbReference>
<dbReference type="FunFam" id="3.30.1490.10:FF:000001">
    <property type="entry name" value="30S ribosomal protein S8"/>
    <property type="match status" value="1"/>
</dbReference>
<dbReference type="Gene3D" id="3.30.1370.30">
    <property type="match status" value="1"/>
</dbReference>
<dbReference type="Gene3D" id="3.30.1490.10">
    <property type="match status" value="1"/>
</dbReference>
<dbReference type="HAMAP" id="MF_01302_B">
    <property type="entry name" value="Ribosomal_uS8_B"/>
    <property type="match status" value="1"/>
</dbReference>
<dbReference type="InterPro" id="IPR000630">
    <property type="entry name" value="Ribosomal_uS8"/>
</dbReference>
<dbReference type="InterPro" id="IPR047863">
    <property type="entry name" value="Ribosomal_uS8_CS"/>
</dbReference>
<dbReference type="InterPro" id="IPR035987">
    <property type="entry name" value="Ribosomal_uS8_sf"/>
</dbReference>
<dbReference type="NCBIfam" id="NF001109">
    <property type="entry name" value="PRK00136.1"/>
    <property type="match status" value="1"/>
</dbReference>
<dbReference type="PANTHER" id="PTHR11758">
    <property type="entry name" value="40S RIBOSOMAL PROTEIN S15A"/>
    <property type="match status" value="1"/>
</dbReference>
<dbReference type="Pfam" id="PF00410">
    <property type="entry name" value="Ribosomal_S8"/>
    <property type="match status" value="1"/>
</dbReference>
<dbReference type="SUPFAM" id="SSF56047">
    <property type="entry name" value="Ribosomal protein S8"/>
    <property type="match status" value="1"/>
</dbReference>
<dbReference type="PROSITE" id="PS00053">
    <property type="entry name" value="RIBOSOMAL_S8"/>
    <property type="match status" value="1"/>
</dbReference>
<keyword id="KW-1185">Reference proteome</keyword>
<keyword id="KW-0687">Ribonucleoprotein</keyword>
<keyword id="KW-0689">Ribosomal protein</keyword>
<keyword id="KW-0694">RNA-binding</keyword>
<keyword id="KW-0699">rRNA-binding</keyword>
<accession>A1BJ20</accession>
<gene>
    <name evidence="1" type="primary">rpsH</name>
    <name type="ordered locus">Cpha266_2409</name>
</gene>
<reference key="1">
    <citation type="submission" date="2006-12" db="EMBL/GenBank/DDBJ databases">
        <title>Complete sequence of Chlorobium phaeobacteroides DSM 266.</title>
        <authorList>
            <consortium name="US DOE Joint Genome Institute"/>
            <person name="Copeland A."/>
            <person name="Lucas S."/>
            <person name="Lapidus A."/>
            <person name="Barry K."/>
            <person name="Detter J.C."/>
            <person name="Glavina del Rio T."/>
            <person name="Hammon N."/>
            <person name="Israni S."/>
            <person name="Pitluck S."/>
            <person name="Goltsman E."/>
            <person name="Schmutz J."/>
            <person name="Larimer F."/>
            <person name="Land M."/>
            <person name="Hauser L."/>
            <person name="Mikhailova N."/>
            <person name="Li T."/>
            <person name="Overmann J."/>
            <person name="Bryant D.A."/>
            <person name="Richardson P."/>
        </authorList>
    </citation>
    <scope>NUCLEOTIDE SEQUENCE [LARGE SCALE GENOMIC DNA]</scope>
    <source>
        <strain>DSM 266 / SMG 266 / 2430</strain>
    </source>
</reference>
<organism>
    <name type="scientific">Chlorobium phaeobacteroides (strain DSM 266 / SMG 266 / 2430)</name>
    <dbReference type="NCBI Taxonomy" id="290317"/>
    <lineage>
        <taxon>Bacteria</taxon>
        <taxon>Pseudomonadati</taxon>
        <taxon>Chlorobiota</taxon>
        <taxon>Chlorobiia</taxon>
        <taxon>Chlorobiales</taxon>
        <taxon>Chlorobiaceae</taxon>
        <taxon>Chlorobium/Pelodictyon group</taxon>
        <taxon>Chlorobium</taxon>
    </lineage>
</organism>
<sequence>MPVTDSIADFITRIRNAGRARNKTTDIPYSKLRENMSQLLLEKGYIKNFTVITTEKFPIIRVDLKYGATGESAIKEITRVSKPGRRVYDGKDIKKYLGGLGLYILSSSKGIITDKEARAQGVGGEVLFRIY</sequence>
<evidence type="ECO:0000255" key="1">
    <source>
        <dbReference type="HAMAP-Rule" id="MF_01302"/>
    </source>
</evidence>
<evidence type="ECO:0000305" key="2"/>